<name>NPLP4_DROME</name>
<organism>
    <name type="scientific">Drosophila melanogaster</name>
    <name type="common">Fruit fly</name>
    <dbReference type="NCBI Taxonomy" id="7227"/>
    <lineage>
        <taxon>Eukaryota</taxon>
        <taxon>Metazoa</taxon>
        <taxon>Ecdysozoa</taxon>
        <taxon>Arthropoda</taxon>
        <taxon>Hexapoda</taxon>
        <taxon>Insecta</taxon>
        <taxon>Pterygota</taxon>
        <taxon>Neoptera</taxon>
        <taxon>Endopterygota</taxon>
        <taxon>Diptera</taxon>
        <taxon>Brachycera</taxon>
        <taxon>Muscomorpha</taxon>
        <taxon>Ephydroidea</taxon>
        <taxon>Drosophilidae</taxon>
        <taxon>Drosophila</taxon>
        <taxon>Sophophora</taxon>
    </lineage>
</organism>
<gene>
    <name type="primary">Nplp4</name>
    <name type="ORF">CG15361</name>
</gene>
<reference key="1">
    <citation type="journal article" date="2000" name="Science">
        <title>The genome sequence of Drosophila melanogaster.</title>
        <authorList>
            <person name="Adams M.D."/>
            <person name="Celniker S.E."/>
            <person name="Holt R.A."/>
            <person name="Evans C.A."/>
            <person name="Gocayne J.D."/>
            <person name="Amanatides P.G."/>
            <person name="Scherer S.E."/>
            <person name="Li P.W."/>
            <person name="Hoskins R.A."/>
            <person name="Galle R.F."/>
            <person name="George R.A."/>
            <person name="Lewis S.E."/>
            <person name="Richards S."/>
            <person name="Ashburner M."/>
            <person name="Henderson S.N."/>
            <person name="Sutton G.G."/>
            <person name="Wortman J.R."/>
            <person name="Yandell M.D."/>
            <person name="Zhang Q."/>
            <person name="Chen L.X."/>
            <person name="Brandon R.C."/>
            <person name="Rogers Y.-H.C."/>
            <person name="Blazej R.G."/>
            <person name="Champe M."/>
            <person name="Pfeiffer B.D."/>
            <person name="Wan K.H."/>
            <person name="Doyle C."/>
            <person name="Baxter E.G."/>
            <person name="Helt G."/>
            <person name="Nelson C.R."/>
            <person name="Miklos G.L.G."/>
            <person name="Abril J.F."/>
            <person name="Agbayani A."/>
            <person name="An H.-J."/>
            <person name="Andrews-Pfannkoch C."/>
            <person name="Baldwin D."/>
            <person name="Ballew R.M."/>
            <person name="Basu A."/>
            <person name="Baxendale J."/>
            <person name="Bayraktaroglu L."/>
            <person name="Beasley E.M."/>
            <person name="Beeson K.Y."/>
            <person name="Benos P.V."/>
            <person name="Berman B.P."/>
            <person name="Bhandari D."/>
            <person name="Bolshakov S."/>
            <person name="Borkova D."/>
            <person name="Botchan M.R."/>
            <person name="Bouck J."/>
            <person name="Brokstein P."/>
            <person name="Brottier P."/>
            <person name="Burtis K.C."/>
            <person name="Busam D.A."/>
            <person name="Butler H."/>
            <person name="Cadieu E."/>
            <person name="Center A."/>
            <person name="Chandra I."/>
            <person name="Cherry J.M."/>
            <person name="Cawley S."/>
            <person name="Dahlke C."/>
            <person name="Davenport L.B."/>
            <person name="Davies P."/>
            <person name="de Pablos B."/>
            <person name="Delcher A."/>
            <person name="Deng Z."/>
            <person name="Mays A.D."/>
            <person name="Dew I."/>
            <person name="Dietz S.M."/>
            <person name="Dodson K."/>
            <person name="Doup L.E."/>
            <person name="Downes M."/>
            <person name="Dugan-Rocha S."/>
            <person name="Dunkov B.C."/>
            <person name="Dunn P."/>
            <person name="Durbin K.J."/>
            <person name="Evangelista C.C."/>
            <person name="Ferraz C."/>
            <person name="Ferriera S."/>
            <person name="Fleischmann W."/>
            <person name="Fosler C."/>
            <person name="Gabrielian A.E."/>
            <person name="Garg N.S."/>
            <person name="Gelbart W.M."/>
            <person name="Glasser K."/>
            <person name="Glodek A."/>
            <person name="Gong F."/>
            <person name="Gorrell J.H."/>
            <person name="Gu Z."/>
            <person name="Guan P."/>
            <person name="Harris M."/>
            <person name="Harris N.L."/>
            <person name="Harvey D.A."/>
            <person name="Heiman T.J."/>
            <person name="Hernandez J.R."/>
            <person name="Houck J."/>
            <person name="Hostin D."/>
            <person name="Houston K.A."/>
            <person name="Howland T.J."/>
            <person name="Wei M.-H."/>
            <person name="Ibegwam C."/>
            <person name="Jalali M."/>
            <person name="Kalush F."/>
            <person name="Karpen G.H."/>
            <person name="Ke Z."/>
            <person name="Kennison J.A."/>
            <person name="Ketchum K.A."/>
            <person name="Kimmel B.E."/>
            <person name="Kodira C.D."/>
            <person name="Kraft C.L."/>
            <person name="Kravitz S."/>
            <person name="Kulp D."/>
            <person name="Lai Z."/>
            <person name="Lasko P."/>
            <person name="Lei Y."/>
            <person name="Levitsky A.A."/>
            <person name="Li J.H."/>
            <person name="Li Z."/>
            <person name="Liang Y."/>
            <person name="Lin X."/>
            <person name="Liu X."/>
            <person name="Mattei B."/>
            <person name="McIntosh T.C."/>
            <person name="McLeod M.P."/>
            <person name="McPherson D."/>
            <person name="Merkulov G."/>
            <person name="Milshina N.V."/>
            <person name="Mobarry C."/>
            <person name="Morris J."/>
            <person name="Moshrefi A."/>
            <person name="Mount S.M."/>
            <person name="Moy M."/>
            <person name="Murphy B."/>
            <person name="Murphy L."/>
            <person name="Muzny D.M."/>
            <person name="Nelson D.L."/>
            <person name="Nelson D.R."/>
            <person name="Nelson K.A."/>
            <person name="Nixon K."/>
            <person name="Nusskern D.R."/>
            <person name="Pacleb J.M."/>
            <person name="Palazzolo M."/>
            <person name="Pittman G.S."/>
            <person name="Pan S."/>
            <person name="Pollard J."/>
            <person name="Puri V."/>
            <person name="Reese M.G."/>
            <person name="Reinert K."/>
            <person name="Remington K."/>
            <person name="Saunders R.D.C."/>
            <person name="Scheeler F."/>
            <person name="Shen H."/>
            <person name="Shue B.C."/>
            <person name="Siden-Kiamos I."/>
            <person name="Simpson M."/>
            <person name="Skupski M.P."/>
            <person name="Smith T.J."/>
            <person name="Spier E."/>
            <person name="Spradling A.C."/>
            <person name="Stapleton M."/>
            <person name="Strong R."/>
            <person name="Sun E."/>
            <person name="Svirskas R."/>
            <person name="Tector C."/>
            <person name="Turner R."/>
            <person name="Venter E."/>
            <person name="Wang A.H."/>
            <person name="Wang X."/>
            <person name="Wang Z.-Y."/>
            <person name="Wassarman D.A."/>
            <person name="Weinstock G.M."/>
            <person name="Weissenbach J."/>
            <person name="Williams S.M."/>
            <person name="Woodage T."/>
            <person name="Worley K.C."/>
            <person name="Wu D."/>
            <person name="Yang S."/>
            <person name="Yao Q.A."/>
            <person name="Ye J."/>
            <person name="Yeh R.-F."/>
            <person name="Zaveri J.S."/>
            <person name="Zhan M."/>
            <person name="Zhang G."/>
            <person name="Zhao Q."/>
            <person name="Zheng L."/>
            <person name="Zheng X.H."/>
            <person name="Zhong F.N."/>
            <person name="Zhong W."/>
            <person name="Zhou X."/>
            <person name="Zhu S.C."/>
            <person name="Zhu X."/>
            <person name="Smith H.O."/>
            <person name="Gibbs R.A."/>
            <person name="Myers E.W."/>
            <person name="Rubin G.M."/>
            <person name="Venter J.C."/>
        </authorList>
    </citation>
    <scope>NUCLEOTIDE SEQUENCE [LARGE SCALE GENOMIC DNA]</scope>
    <source>
        <strain>Berkeley</strain>
    </source>
</reference>
<reference key="2">
    <citation type="journal article" date="2002" name="Genome Biol.">
        <title>Annotation of the Drosophila melanogaster euchromatic genome: a systematic review.</title>
        <authorList>
            <person name="Misra S."/>
            <person name="Crosby M.A."/>
            <person name="Mungall C.J."/>
            <person name="Matthews B.B."/>
            <person name="Campbell K.S."/>
            <person name="Hradecky P."/>
            <person name="Huang Y."/>
            <person name="Kaminker J.S."/>
            <person name="Millburn G.H."/>
            <person name="Prochnik S.E."/>
            <person name="Smith C.D."/>
            <person name="Tupy J.L."/>
            <person name="Whitfield E.J."/>
            <person name="Bayraktaroglu L."/>
            <person name="Berman B.P."/>
            <person name="Bettencourt B.R."/>
            <person name="Celniker S.E."/>
            <person name="de Grey A.D.N.J."/>
            <person name="Drysdale R.A."/>
            <person name="Harris N.L."/>
            <person name="Richter J."/>
            <person name="Russo S."/>
            <person name="Schroeder A.J."/>
            <person name="Shu S.Q."/>
            <person name="Stapleton M."/>
            <person name="Yamada C."/>
            <person name="Ashburner M."/>
            <person name="Gelbart W.M."/>
            <person name="Rubin G.M."/>
            <person name="Lewis S.E."/>
        </authorList>
    </citation>
    <scope>GENOME REANNOTATION</scope>
    <source>
        <strain>Berkeley</strain>
    </source>
</reference>
<reference key="3">
    <citation type="journal article" date="2002" name="J. Biol. Chem.">
        <title>Peptidomics of the larval Drosophila melanogaster central nervous system.</title>
        <authorList>
            <person name="Baggerman G."/>
            <person name="Cerstiaens A."/>
            <person name="De Loof A."/>
            <person name="Schoofs L."/>
        </authorList>
    </citation>
    <scope>PROTEIN SEQUENCE OF 41-62</scope>
    <source>
        <tissue>Larva</tissue>
    </source>
</reference>
<reference key="4">
    <citation type="journal article" date="2004" name="J. Neurochem.">
        <title>Expression of a novel neuropeptide, NVGTLARDFQLPIPNamide, in the larval and adult brain of Drosophila melanogaster.</title>
        <authorList>
            <person name="Verleyen P."/>
            <person name="Baggerman G."/>
            <person name="Wiehart U."/>
            <person name="Schoeters E."/>
            <person name="Van Lommel A."/>
            <person name="De Loof A."/>
            <person name="Schoofs L."/>
        </authorList>
    </citation>
    <scope>PROTEIN SEQUENCE OF 41-62</scope>
    <source>
        <tissue>CNS</tissue>
    </source>
</reference>
<dbReference type="EMBL" id="AE014134">
    <property type="protein sequence ID" value="AAF51315.1"/>
    <property type="molecule type" value="Genomic_DNA"/>
</dbReference>
<dbReference type="RefSeq" id="NP_001259893.1">
    <property type="nucleotide sequence ID" value="NM_001272964.2"/>
</dbReference>
<dbReference type="RefSeq" id="NP_652352.1">
    <property type="nucleotide sequence ID" value="NM_144095.3"/>
</dbReference>
<dbReference type="BioGRID" id="72580">
    <property type="interactions" value="1"/>
</dbReference>
<dbReference type="DIP" id="DIP-22218N"/>
<dbReference type="FunCoup" id="Q9VQ66">
    <property type="interactions" value="28"/>
</dbReference>
<dbReference type="STRING" id="7227.FBpp0306800"/>
<dbReference type="PaxDb" id="7227-FBpp0077493"/>
<dbReference type="DNASU" id="50190"/>
<dbReference type="EnsemblMetazoa" id="FBtr0077817">
    <property type="protein sequence ID" value="FBpp0077493"/>
    <property type="gene ID" value="FBgn0040717"/>
</dbReference>
<dbReference type="EnsemblMetazoa" id="FBtr0334759">
    <property type="protein sequence ID" value="FBpp0306800"/>
    <property type="gene ID" value="FBgn0040717"/>
</dbReference>
<dbReference type="GeneID" id="50190"/>
<dbReference type="KEGG" id="dme:Dmel_CG15361"/>
<dbReference type="AGR" id="FB:FBgn0040717"/>
<dbReference type="CTD" id="50190"/>
<dbReference type="FlyBase" id="FBgn0040717">
    <property type="gene designation" value="Nplp4"/>
</dbReference>
<dbReference type="VEuPathDB" id="VectorBase:FBgn0040717"/>
<dbReference type="eggNOG" id="ENOG502T8QV">
    <property type="taxonomic scope" value="Eukaryota"/>
</dbReference>
<dbReference type="HOGENOM" id="CLU_2869908_0_0_1"/>
<dbReference type="InParanoid" id="Q9VQ66"/>
<dbReference type="OMA" id="QITNCNR"/>
<dbReference type="SignaLink" id="Q9VQ66"/>
<dbReference type="BioGRID-ORCS" id="50190">
    <property type="hits" value="0 hits in 1 CRISPR screen"/>
</dbReference>
<dbReference type="GenomeRNAi" id="50190"/>
<dbReference type="PRO" id="PR:Q9VQ66"/>
<dbReference type="Proteomes" id="UP000000803">
    <property type="component" value="Chromosome 2L"/>
</dbReference>
<dbReference type="Bgee" id="FBgn0040717">
    <property type="expression patterns" value="Expressed in adult tracheocyte (Drosophila) in proboscis and 16 other cell types or tissues"/>
</dbReference>
<dbReference type="ExpressionAtlas" id="Q9VQ66">
    <property type="expression patterns" value="baseline and differential"/>
</dbReference>
<dbReference type="GO" id="GO:0005576">
    <property type="term" value="C:extracellular region"/>
    <property type="evidence" value="ECO:0000303"/>
    <property type="project" value="UniProtKB"/>
</dbReference>
<dbReference type="GO" id="GO:0005184">
    <property type="term" value="F:neuropeptide hormone activity"/>
    <property type="evidence" value="ECO:0000303"/>
    <property type="project" value="UniProtKB"/>
</dbReference>
<dbReference type="GO" id="GO:0007218">
    <property type="term" value="P:neuropeptide signaling pathway"/>
    <property type="evidence" value="ECO:0000303"/>
    <property type="project" value="UniProtKB"/>
</dbReference>
<proteinExistence type="evidence at protein level"/>
<comment type="subcellular location">
    <subcellularLocation>
        <location>Secreted</location>
    </subcellularLocation>
</comment>
<feature type="signal peptide" evidence="1">
    <location>
        <begin position="1"/>
        <end position="18"/>
    </location>
</feature>
<feature type="propeptide" id="PRO_0000021853">
    <location>
        <begin position="19"/>
        <end position="40"/>
    </location>
</feature>
<feature type="peptide" id="PRO_0000021854" description="Neuropeptide-like 4">
    <location>
        <begin position="41"/>
        <end position="62"/>
    </location>
</feature>
<feature type="propeptide" id="PRO_0000021855">
    <location>
        <begin position="63"/>
        <end position="64"/>
    </location>
</feature>
<accession>Q9VQ66</accession>
<protein>
    <recommendedName>
        <fullName>Neuropeptide-like 4</fullName>
    </recommendedName>
    <alternativeName>
        <fullName>YSY peptide</fullName>
    </alternativeName>
</protein>
<sequence>MFKLLVVVFAALFAAALAVPAPVARANPAPIPIASPEPAPQYYYGASPYAYSGGYYDSPYSYYG</sequence>
<evidence type="ECO:0000255" key="1"/>
<keyword id="KW-0903">Direct protein sequencing</keyword>
<keyword id="KW-0527">Neuropeptide</keyword>
<keyword id="KW-1185">Reference proteome</keyword>
<keyword id="KW-0964">Secreted</keyword>
<keyword id="KW-0732">Signal</keyword>